<protein>
    <recommendedName>
        <fullName evidence="2">Envelope glycoprotein B</fullName>
        <shortName evidence="2">gB</shortName>
    </recommendedName>
</protein>
<organismHost>
    <name type="scientific">Homo sapiens</name>
    <name type="common">Human</name>
    <dbReference type="NCBI Taxonomy" id="9606"/>
</organismHost>
<dbReference type="EMBL" id="X14112">
    <property type="protein sequence ID" value="CAA32320.1"/>
    <property type="molecule type" value="Genomic_DNA"/>
</dbReference>
<dbReference type="EMBL" id="DQ889502">
    <property type="protein sequence ID" value="ABI63489.1"/>
    <property type="molecule type" value="Genomic_DNA"/>
</dbReference>
<dbReference type="EMBL" id="FJ593289">
    <property type="protein sequence ID" value="ACM62250.1"/>
    <property type="molecule type" value="Genomic_DNA"/>
</dbReference>
<dbReference type="PIR" id="I30084">
    <property type="entry name" value="VGBEW7"/>
</dbReference>
<dbReference type="RefSeq" id="YP_009137102.1">
    <property type="nucleotide sequence ID" value="NC_001806.2"/>
</dbReference>
<dbReference type="PDB" id="5V2S">
    <property type="method" value="X-ray"/>
    <property type="resolution" value="3.60 A"/>
    <property type="chains" value="A=72-904"/>
</dbReference>
<dbReference type="PDB" id="6BM8">
    <property type="method" value="X-ray"/>
    <property type="resolution" value="4.10 A"/>
    <property type="chains" value="A=72-904"/>
</dbReference>
<dbReference type="PDBsum" id="5V2S"/>
<dbReference type="PDBsum" id="6BM8"/>
<dbReference type="SMR" id="P10211"/>
<dbReference type="BioGRID" id="971469">
    <property type="interactions" value="1"/>
</dbReference>
<dbReference type="ChEMBL" id="CHEMBL2364696"/>
<dbReference type="DrugCentral" id="P10211"/>
<dbReference type="TCDB" id="1.G.10.1.1">
    <property type="family name" value="the herpes simplex virus membrane fusion complex (hsv-mfc) family"/>
</dbReference>
<dbReference type="GlyCosmos" id="P10211">
    <property type="glycosylation" value="6 sites, No reported glycans"/>
</dbReference>
<dbReference type="GeneID" id="24271469"/>
<dbReference type="KEGG" id="vg:24271469"/>
<dbReference type="PRO" id="PR:P10211"/>
<dbReference type="Proteomes" id="UP000009294">
    <property type="component" value="Segment"/>
</dbReference>
<dbReference type="Proteomes" id="UP000180652">
    <property type="component" value="Segment"/>
</dbReference>
<dbReference type="GO" id="GO:0044175">
    <property type="term" value="C:host cell endosome membrane"/>
    <property type="evidence" value="ECO:0007669"/>
    <property type="project" value="UniProtKB-SubCell"/>
</dbReference>
<dbReference type="GO" id="GO:0044178">
    <property type="term" value="C:host cell Golgi membrane"/>
    <property type="evidence" value="ECO:0007669"/>
    <property type="project" value="UniProtKB-SubCell"/>
</dbReference>
<dbReference type="GO" id="GO:0020002">
    <property type="term" value="C:host cell plasma membrane"/>
    <property type="evidence" value="ECO:0007669"/>
    <property type="project" value="UniProtKB-SubCell"/>
</dbReference>
<dbReference type="GO" id="GO:0016020">
    <property type="term" value="C:membrane"/>
    <property type="evidence" value="ECO:0007669"/>
    <property type="project" value="UniProtKB-KW"/>
</dbReference>
<dbReference type="GO" id="GO:0019031">
    <property type="term" value="C:viral envelope"/>
    <property type="evidence" value="ECO:0007669"/>
    <property type="project" value="UniProtKB-KW"/>
</dbReference>
<dbReference type="GO" id="GO:0055036">
    <property type="term" value="C:virion membrane"/>
    <property type="evidence" value="ECO:0007669"/>
    <property type="project" value="UniProtKB-SubCell"/>
</dbReference>
<dbReference type="GO" id="GO:0046718">
    <property type="term" value="P:symbiont entry into host cell"/>
    <property type="evidence" value="ECO:0007669"/>
    <property type="project" value="UniProtKB-KW"/>
</dbReference>
<dbReference type="GO" id="GO:0019062">
    <property type="term" value="P:virion attachment to host cell"/>
    <property type="evidence" value="ECO:0007669"/>
    <property type="project" value="UniProtKB-KW"/>
</dbReference>
<dbReference type="FunFam" id="1.20.5.1890:FF:000001">
    <property type="entry name" value="Envelope glycoprotein B"/>
    <property type="match status" value="1"/>
</dbReference>
<dbReference type="FunFam" id="2.30.29.100:FF:000001">
    <property type="entry name" value="Envelope glycoprotein B"/>
    <property type="match status" value="1"/>
</dbReference>
<dbReference type="FunFam" id="2.30.30.1230:FF:000001">
    <property type="entry name" value="Envelope glycoprotein B"/>
    <property type="match status" value="1"/>
</dbReference>
<dbReference type="FunFam" id="6.10.250.3280:FF:000001">
    <property type="entry name" value="Envelope glycoprotein B"/>
    <property type="match status" value="1"/>
</dbReference>
<dbReference type="Gene3D" id="1.20.5.1890">
    <property type="match status" value="1"/>
</dbReference>
<dbReference type="Gene3D" id="2.30.29.100">
    <property type="match status" value="1"/>
</dbReference>
<dbReference type="Gene3D" id="2.30.30.1230">
    <property type="match status" value="1"/>
</dbReference>
<dbReference type="Gene3D" id="6.10.250.3280">
    <property type="match status" value="1"/>
</dbReference>
<dbReference type="HAMAP" id="MF_04032">
    <property type="entry name" value="HSV_GB"/>
    <property type="match status" value="1"/>
</dbReference>
<dbReference type="InterPro" id="IPR035377">
    <property type="entry name" value="Glycoprot_B_PH1"/>
</dbReference>
<dbReference type="InterPro" id="IPR035381">
    <property type="entry name" value="Glycoprot_B_PH2"/>
</dbReference>
<dbReference type="InterPro" id="IPR038631">
    <property type="entry name" value="Glycoprot_B_PH2_sf"/>
</dbReference>
<dbReference type="InterPro" id="IPR055341">
    <property type="entry name" value="Glycoprotein_B_ecto_C"/>
</dbReference>
<dbReference type="InterPro" id="IPR000234">
    <property type="entry name" value="Herpes_Glycoprot_B"/>
</dbReference>
<dbReference type="Pfam" id="PF17416">
    <property type="entry name" value="Glycoprot_B_PH1"/>
    <property type="match status" value="1"/>
</dbReference>
<dbReference type="Pfam" id="PF17417">
    <property type="entry name" value="Glycoprot_B_PH2"/>
    <property type="match status" value="1"/>
</dbReference>
<dbReference type="Pfam" id="PF00606">
    <property type="entry name" value="Glycoprotein_B"/>
    <property type="match status" value="1"/>
</dbReference>
<dbReference type="SUPFAM" id="SSF161008">
    <property type="entry name" value="Viral glycoprotein ectodomain-like"/>
    <property type="match status" value="1"/>
</dbReference>
<reference key="1">
    <citation type="journal article" date="1988" name="J. Gen. Virol.">
        <title>The complete DNA sequence of the long unique region in the genome of herpes simplex virus type 1.</title>
        <authorList>
            <person name="McGeoch D.J."/>
            <person name="Dalrymple M.A."/>
            <person name="Davison A.J."/>
            <person name="Dolan A."/>
            <person name="Frame M.C."/>
            <person name="McNab D."/>
            <person name="Perry L.J."/>
            <person name="Scott J.E."/>
            <person name="Taylor P."/>
        </authorList>
    </citation>
    <scope>NUCLEOTIDE SEQUENCE [LARGE SCALE GENOMIC DNA]</scope>
</reference>
<reference key="2">
    <citation type="journal article" date="2007" name="Microbes Infect.">
        <title>Determination and analysis of the DNA sequence of highly attenuated herpes simplex virus type 1 mutant HF10, a potential oncolytic virus.</title>
        <authorList>
            <person name="Ushijima Y."/>
            <person name="Luo C."/>
            <person name="Goshima F."/>
            <person name="Yamauchi Y."/>
            <person name="Kimura H."/>
            <person name="Nishiyama Y."/>
        </authorList>
    </citation>
    <scope>NUCLEOTIDE SEQUENCE [LARGE SCALE GENOMIC DNA]</scope>
    <source>
        <strain>Nonneuroinvasive mutant HF10</strain>
    </source>
</reference>
<reference key="3">
    <citation type="submission" date="2008-12" db="EMBL/GenBank/DDBJ databases">
        <title>Herpes simplex virus type 1 bacterial artificial chromosome.</title>
        <authorList>
            <person name="Cunningham C."/>
            <person name="Davison A.J."/>
        </authorList>
    </citation>
    <scope>NUCLEOTIDE SEQUENCE [LARGE SCALE GENOMIC DNA]</scope>
    <source>
        <strain>17 syn+</strain>
    </source>
</reference>
<reference key="4">
    <citation type="journal article" date="2005" name="J. Virol.">
        <title>Herpes simplex virus type 1 gK is required for gB-mediated virus-induced cell fusion, while neither gB and gK nor gB and UL20p function redundantly in virion de-envelopment.</title>
        <authorList>
            <person name="Melancon J.M."/>
            <person name="Luna R.E."/>
            <person name="Foster T.P."/>
            <person name="Kousoulas K.G."/>
        </authorList>
    </citation>
    <scope>FUNCTION</scope>
</reference>
<reference key="5">
    <citation type="journal article" date="2006" name="J. Immunol.">
        <title>Human alpha- and beta-defensins block multiple steps in herpes simplex virus infection.</title>
        <authorList>
            <person name="Hazrati E."/>
            <person name="Galen B."/>
            <person name="Lu W."/>
            <person name="Wang W."/>
            <person name="Ouyang Y."/>
            <person name="Keller M.J."/>
            <person name="Lehrer R.I."/>
            <person name="Herold B.C."/>
        </authorList>
    </citation>
    <scope>INTERACTION WITH HOST DEFA1; DEFA2 AND DEFA3</scope>
</reference>
<reference key="6">
    <citation type="journal article" date="2007" name="J. Virol.">
        <title>Intracellular trafficking and maturation of herpes simplex virus type 1 gB and virus egress require functional biogenesis of multivesicular bodies.</title>
        <authorList>
            <person name="Calistri A."/>
            <person name="Sette P."/>
            <person name="Salata C."/>
            <person name="Cancellotti E."/>
            <person name="Forghieri C."/>
            <person name="Comin A."/>
            <person name="Goettlinger H."/>
            <person name="Campadelli-Fiume G."/>
            <person name="Palu G."/>
            <person name="Parolin C."/>
        </authorList>
    </citation>
    <scope>SUBCELLULAR LOCATION</scope>
    <scope>UBIQUITINATION</scope>
</reference>
<reference key="7">
    <citation type="journal article" date="2007" name="J. Virol.">
        <title>Complexes between herpes simplex virus glycoproteins gD, gB, and gH detected in cells by complementation of split enhanced green fluorescent protein.</title>
        <authorList>
            <person name="Avitabile E."/>
            <person name="Forghieri C."/>
            <person name="Campadelli-Fiume G."/>
        </authorList>
    </citation>
    <scope>IDENTIFICATION IN A COMPLEX WITH GH AND GD</scope>
</reference>
<reference evidence="8 9" key="8">
    <citation type="journal article" date="2018" name="Nat. Struct. Mol. Biol.">
        <title>Structural basis for membrane anchoring and fusion regulation of the herpes simplex virus fusogen gB.</title>
        <authorList>
            <person name="Cooper R.S."/>
            <person name="Georgieva E.R."/>
            <person name="Borbat P.P."/>
            <person name="Freed J.H."/>
            <person name="Heldwein E.E."/>
        </authorList>
    </citation>
    <scope>X-RAY CRYSTALLOGRAPHY (3.60 ANGSTROMS) OF 72-904</scope>
    <scope>SUBUNIT</scope>
</reference>
<name>GB_HHV11</name>
<gene>
    <name evidence="2" type="primary">gB</name>
    <name type="ORF">UL27</name>
</gene>
<accession>P10211</accession>
<accession>B9VQF5</accession>
<accession>Q09IA6</accession>
<feature type="signal peptide" evidence="2">
    <location>
        <begin position="1"/>
        <end position="30"/>
    </location>
</feature>
<feature type="chain" id="PRO_0000038160" description="Envelope glycoprotein B" evidence="2">
    <location>
        <begin position="31"/>
        <end position="904"/>
    </location>
</feature>
<feature type="topological domain" description="Virion surface" evidence="2">
    <location>
        <begin position="31"/>
        <end position="774"/>
    </location>
</feature>
<feature type="transmembrane region" description="Helical" evidence="2">
    <location>
        <begin position="775"/>
        <end position="795"/>
    </location>
</feature>
<feature type="topological domain" description="Intravirion" evidence="2">
    <location>
        <begin position="796"/>
        <end position="904"/>
    </location>
</feature>
<feature type="region of interest" description="Disordered" evidence="3">
    <location>
        <begin position="31"/>
        <end position="88"/>
    </location>
</feature>
<feature type="region of interest" description="Involved in fusion and/or binding to host membrane" evidence="2">
    <location>
        <begin position="173"/>
        <end position="179"/>
    </location>
</feature>
<feature type="region of interest" description="Involved in fusion and/or binding to host membrane" evidence="2">
    <location>
        <begin position="258"/>
        <end position="265"/>
    </location>
</feature>
<feature type="region of interest" description="Disordered" evidence="3">
    <location>
        <begin position="470"/>
        <end position="492"/>
    </location>
</feature>
<feature type="region of interest" description="Hydrophobic membrane proximal region" evidence="2">
    <location>
        <begin position="719"/>
        <end position="772"/>
    </location>
</feature>
<feature type="region of interest" description="Disordered" evidence="3">
    <location>
        <begin position="883"/>
        <end position="904"/>
    </location>
</feature>
<feature type="short sequence motif" description="Golgi targeting" evidence="2">
    <location>
        <begin position="849"/>
        <end position="852"/>
    </location>
</feature>
<feature type="short sequence motif" description="Internalization motif" evidence="2">
    <location>
        <begin position="889"/>
        <end position="892"/>
    </location>
</feature>
<feature type="compositionally biased region" description="Low complexity" evidence="3">
    <location>
        <begin position="31"/>
        <end position="52"/>
    </location>
</feature>
<feature type="compositionally biased region" description="Pro residues" evidence="3">
    <location>
        <begin position="53"/>
        <end position="66"/>
    </location>
</feature>
<feature type="compositionally biased region" description="Basic residues" evidence="3">
    <location>
        <begin position="70"/>
        <end position="79"/>
    </location>
</feature>
<feature type="compositionally biased region" description="Pro residues" evidence="3">
    <location>
        <begin position="476"/>
        <end position="485"/>
    </location>
</feature>
<feature type="glycosylation site" description="N-linked (GlcNAc...) asparagine; by host" evidence="2">
    <location>
        <position position="87"/>
    </location>
</feature>
<feature type="glycosylation site" description="N-linked (GlcNAc...) asparagine; by host" evidence="2">
    <location>
        <position position="141"/>
    </location>
</feature>
<feature type="glycosylation site" description="N-linked (GlcNAc...) asparagine; by host" evidence="2">
    <location>
        <position position="398"/>
    </location>
</feature>
<feature type="glycosylation site" description="N-linked (GlcNAc...) asparagine; by host" evidence="2">
    <location>
        <position position="430"/>
    </location>
</feature>
<feature type="glycosylation site" description="N-linked (GlcNAc...) asparagine; by host" evidence="2">
    <location>
        <position position="489"/>
    </location>
</feature>
<feature type="glycosylation site" description="N-linked (GlcNAc...) asparagine; by host" evidence="2">
    <location>
        <position position="674"/>
    </location>
</feature>
<feature type="disulfide bond" evidence="2">
    <location>
        <begin position="116"/>
        <end position="573"/>
    </location>
</feature>
<feature type="disulfide bond" evidence="2">
    <location>
        <begin position="133"/>
        <end position="529"/>
    </location>
</feature>
<feature type="disulfide bond" evidence="2">
    <location>
        <begin position="207"/>
        <end position="271"/>
    </location>
</feature>
<feature type="disulfide bond" evidence="2">
    <location>
        <begin position="364"/>
        <end position="412"/>
    </location>
</feature>
<feature type="disulfide bond" evidence="2">
    <location>
        <begin position="596"/>
        <end position="633"/>
    </location>
</feature>
<feature type="sequence variant">
    <original>R</original>
    <variation>K</variation>
    <location>
        <position position="73"/>
    </location>
</feature>
<feature type="sequence variant" description="In strain: Nonneuroinvasive mutant HF10.">
    <original>P</original>
    <variation>L</variation>
    <location>
        <position position="80"/>
    </location>
</feature>
<feature type="sequence variant" description="In strain: Nonneuroinvasive mutant HF10.">
    <original>V</original>
    <variation>M</variation>
    <location>
        <position position="555"/>
    </location>
</feature>
<feature type="sequence variant" description="In strain: Nonneuroinvasive mutant HF10.">
    <original>T</original>
    <variation>M</variation>
    <location>
        <position position="572"/>
    </location>
</feature>
<feature type="sequence variant" description="In strain: Nonneuroinvasive mutant HF10.">
    <original>S</original>
    <variation>N</variation>
    <location>
        <position position="668"/>
    </location>
</feature>
<feature type="sequence variant" description="In strain: Nonneuroinvasive mutant HF10.">
    <original>L</original>
    <variation>P</variation>
    <location>
        <position position="817"/>
    </location>
</feature>
<keyword id="KW-0002">3D-structure</keyword>
<keyword id="KW-1015">Disulfide bond</keyword>
<keyword id="KW-0325">Glycoprotein</keyword>
<keyword id="KW-1032">Host cell membrane</keyword>
<keyword id="KW-1039">Host endosome</keyword>
<keyword id="KW-1040">Host Golgi apparatus</keyword>
<keyword id="KW-1043">Host membrane</keyword>
<keyword id="KW-0945">Host-virus interaction</keyword>
<keyword id="KW-0472">Membrane</keyword>
<keyword id="KW-1185">Reference proteome</keyword>
<keyword id="KW-0732">Signal</keyword>
<keyword id="KW-0812">Transmembrane</keyword>
<keyword id="KW-1133">Transmembrane helix</keyword>
<keyword id="KW-0832">Ubl conjugation</keyword>
<keyword id="KW-1161">Viral attachment to host cell</keyword>
<keyword id="KW-0261">Viral envelope protein</keyword>
<keyword id="KW-0946">Virion</keyword>
<keyword id="KW-1160">Virus entry into host cell</keyword>
<sequence>MRQGAPARGRRWFVVWALLGLTLGVLVASAAPSSPGTPGVAAATQAANGGPATPAPPAPGAPPTGDPKPKKNRKPKPPKPPRPAGDNATVAAGHATLREHLRDIKAENTDANFYVCPPPTGATVVQFEQPRRCPTRPEGQNYTEGIAVVFKENIAPYKFKATMYYKDVTVSQVWFGHRYSQFMGIFEDRAPVPFEEVIDKINAKGVCRSTAKYVRNNLETTAFHRDDHETDMELKPANAATRTSRGWHTTDLKYNPSRVEAFHRYGTTVNCIVEEVDARSVYPYDEFVLATGDFVYMSPFYGYREGSHTEHTSYAADRFKQVDGFYARDLTTKARATAPTTRNLLTTPKFTVAWDWVPKRPSVCTMTKWQEVDEMLRSEYGGSFRFSSDAISTTFTTNLTEYPLSRVDLGDCIGKDARDAMDRIFARRYNATHIKVGQPQYYLANGGFLIAYQPLLSNTLAELYVREHLREQSRKPPNPTPPPPGASANASVERIKTTSSIEFARLQFTYNHIQRHVNDMLGRVAIAWCELQNHELTLWNEARKLNPNAIASATVGRRVSARMLGDVMAVSTCVPVAADNVIVQNSMRISSRPGACYSRPLVSFRYEDQGPLVEGQLGENNELRLTRDAIEPCTVGHRRYFTFGGGYVYFEEYAYSHQLSRADITTVSTFIDLNITMLEDHEFVPLEVYTRHEIKDSGLLDYTEVQRRNQLHDLRFADIDTVIHADANAAMFAGLGAFFEGMGDLGRAVGKVVMGIVGGVVSAVSGVSSFMSNPFGALAVGLLVLAGLAAAFFAFRYVMRLQSNPMKALYPLTTKELKNPTNPDASGEGEEGGDFDEAKLAEAREMIRYMALVSAMERTEHKAKKKGTSALLSAKVTDMVMRKRRNTNYTQVPNKDGDADEDDL</sequence>
<organism>
    <name type="scientific">Human herpesvirus 1 (strain 17)</name>
    <name type="common">HHV-1</name>
    <name type="synonym">Human herpes simplex virus 1</name>
    <dbReference type="NCBI Taxonomy" id="10299"/>
    <lineage>
        <taxon>Viruses</taxon>
        <taxon>Duplodnaviria</taxon>
        <taxon>Heunggongvirae</taxon>
        <taxon>Peploviricota</taxon>
        <taxon>Herviviricetes</taxon>
        <taxon>Herpesvirales</taxon>
        <taxon>Orthoherpesviridae</taxon>
        <taxon>Alphaherpesvirinae</taxon>
        <taxon>Simplexvirus</taxon>
        <taxon>Simplexvirus humanalpha1</taxon>
        <taxon>Human herpesvirus 1</taxon>
    </lineage>
</organism>
<evidence type="ECO:0000250" key="1"/>
<evidence type="ECO:0000255" key="2">
    <source>
        <dbReference type="HAMAP-Rule" id="MF_04032"/>
    </source>
</evidence>
<evidence type="ECO:0000256" key="3">
    <source>
        <dbReference type="SAM" id="MobiDB-lite"/>
    </source>
</evidence>
<evidence type="ECO:0000269" key="4">
    <source>
    </source>
</evidence>
<evidence type="ECO:0000269" key="5">
    <source>
    </source>
</evidence>
<evidence type="ECO:0000269" key="6">
    <source>
    </source>
</evidence>
<evidence type="ECO:0000269" key="7">
    <source>
    </source>
</evidence>
<evidence type="ECO:0007744" key="8">
    <source>
        <dbReference type="PDB" id="5V2S"/>
    </source>
</evidence>
<evidence type="ECO:0007744" key="9">
    <source>
        <dbReference type="PDB" id="6BM8"/>
    </source>
</evidence>
<proteinExistence type="evidence at protein level"/>
<comment type="function">
    <text evidence="2 4">Envelope glycoprotein that forms spikes at the surface of virion envelope and binds to the host cell entry receptors MYH9/NMMHC-IIA and MYH10/NMMHC-IIB, promoting the virus entry into host cells. Essential for the initial attachment to heparan sulfate moieties of the host cell surface proteoglycans. Involved in fusion of viral and cellular membranes leading to virus entry into the host cell: following initial binding to its host cell entry receptors, membrane fusion is mediated by the fusion machinery composed at least of gB and the heterodimer gH/gL. May be involved in the fusion between the virion envelope and the outer nuclear membrane during virion egress. Also plays a role, together with gK, in virus-induced cell-to-cell fusion (syncytia formation).</text>
</comment>
<comment type="subunit">
    <text evidence="2 5 7">Homotrimer; disulfide-linked (PubMed:29728654). Interacts with host receptor MYH9/NMMHC-IIA (By similarity). Interacts with host receptor MYH10/NMMHC-IIB (By similarity). Binds to heparan sulfate proteoglycans (By similarity). Interacts with gH/gL heterodimer (By similarity). Interacts with host DEFA1, DEFA2 and DEFA3; these interactions inhibit viral infection (PubMed:17142766).</text>
</comment>
<comment type="subcellular location">
    <subcellularLocation>
        <location evidence="2 6">Virion membrane</location>
        <topology evidence="2">Single-pass type I membrane protein</topology>
    </subcellularLocation>
    <subcellularLocation>
        <location evidence="2 6">Host cell membrane</location>
        <topology evidence="2">Single-pass type I membrane protein</topology>
    </subcellularLocation>
    <subcellularLocation>
        <location evidence="2">Host endosome membrane</location>
        <topology evidence="2">Single-pass type I membrane protein</topology>
    </subcellularLocation>
    <subcellularLocation>
        <location evidence="2">Host Golgi apparatus membrane</location>
        <topology evidence="2">Single-pass type I membrane protein</topology>
    </subcellularLocation>
    <text evidence="2">During virion morphogenesis, this protein probably accumulates in the endosomes and trans-Golgi where secondary envelopment occurs. It is probably transported to the cell surface from where it is endocytosed and directed to the trans-Golgi network (TGN).</text>
</comment>
<comment type="PTM">
    <text evidence="1">The cytoplasmic tail is phosphorylated by the viral kinase US3. Phosphorylation may be linked to a down-regulation of gB expression on cell surface (By similarity).</text>
</comment>
<comment type="PTM">
    <text evidence="6">ubiquitinated.</text>
</comment>
<comment type="similarity">
    <text evidence="2">Belongs to the herpesviridae glycoprotein B family.</text>
</comment>